<dbReference type="EC" id="1.3.1.75" evidence="2 4"/>
<dbReference type="EMBL" id="AC051627">
    <property type="status" value="NOT_ANNOTATED_CDS"/>
    <property type="molecule type" value="Genomic_DNA"/>
</dbReference>
<dbReference type="EMBL" id="CP002688">
    <property type="protein sequence ID" value="AED92595.1"/>
    <property type="molecule type" value="Genomic_DNA"/>
</dbReference>
<dbReference type="EMBL" id="AK117151">
    <property type="protein sequence ID" value="BAC41829.1"/>
    <property type="molecule type" value="mRNA"/>
</dbReference>
<dbReference type="EMBL" id="BT025627">
    <property type="protein sequence ID" value="ABF59045.1"/>
    <property type="molecule type" value="mRNA"/>
</dbReference>
<dbReference type="EMBL" id="AY085692">
    <property type="protein sequence ID" value="AAM62911.1"/>
    <property type="molecule type" value="mRNA"/>
</dbReference>
<dbReference type="RefSeq" id="NP_197367.1">
    <property type="nucleotide sequence ID" value="NM_121871.3"/>
</dbReference>
<dbReference type="SMR" id="Q1H537"/>
<dbReference type="BioGRID" id="17260">
    <property type="interactions" value="1"/>
</dbReference>
<dbReference type="FunCoup" id="Q1H537">
    <property type="interactions" value="852"/>
</dbReference>
<dbReference type="IntAct" id="Q1H537">
    <property type="interactions" value="3"/>
</dbReference>
<dbReference type="STRING" id="3702.Q1H537"/>
<dbReference type="iPTMnet" id="Q1H537"/>
<dbReference type="PaxDb" id="3702-AT5G18660.1"/>
<dbReference type="ProteomicsDB" id="224661"/>
<dbReference type="EnsemblPlants" id="AT5G18660.1">
    <property type="protein sequence ID" value="AT5G18660.1"/>
    <property type="gene ID" value="AT5G18660"/>
</dbReference>
<dbReference type="GeneID" id="831984"/>
<dbReference type="Gramene" id="AT5G18660.1">
    <property type="protein sequence ID" value="AT5G18660.1"/>
    <property type="gene ID" value="AT5G18660"/>
</dbReference>
<dbReference type="KEGG" id="ath:AT5G18660"/>
<dbReference type="Araport" id="AT5G18660"/>
<dbReference type="TAIR" id="AT5G18660">
    <property type="gene designation" value="PCB2"/>
</dbReference>
<dbReference type="eggNOG" id="KOG1203">
    <property type="taxonomic scope" value="Eukaryota"/>
</dbReference>
<dbReference type="HOGENOM" id="CLU_043999_1_0_1"/>
<dbReference type="InParanoid" id="Q1H537"/>
<dbReference type="OMA" id="ASFIVDC"/>
<dbReference type="OrthoDB" id="419598at2759"/>
<dbReference type="PhylomeDB" id="Q1H537"/>
<dbReference type="BioCyc" id="MetaCyc:MONOMER-11752"/>
<dbReference type="BRENDA" id="1.3.1.75">
    <property type="organism ID" value="399"/>
</dbReference>
<dbReference type="UniPathway" id="UPA00668"/>
<dbReference type="PRO" id="PR:Q1H537"/>
<dbReference type="Proteomes" id="UP000006548">
    <property type="component" value="Chromosome 5"/>
</dbReference>
<dbReference type="ExpressionAtlas" id="Q1H537">
    <property type="expression patterns" value="baseline and differential"/>
</dbReference>
<dbReference type="GO" id="GO:0009507">
    <property type="term" value="C:chloroplast"/>
    <property type="evidence" value="ECO:0000314"/>
    <property type="project" value="TAIR"/>
</dbReference>
<dbReference type="GO" id="GO:0009941">
    <property type="term" value="C:chloroplast envelope"/>
    <property type="evidence" value="ECO:0007005"/>
    <property type="project" value="TAIR"/>
</dbReference>
<dbReference type="GO" id="GO:0009534">
    <property type="term" value="C:chloroplast thylakoid"/>
    <property type="evidence" value="ECO:0007005"/>
    <property type="project" value="TAIR"/>
</dbReference>
<dbReference type="GO" id="GO:0009536">
    <property type="term" value="C:plastid"/>
    <property type="evidence" value="ECO:0007005"/>
    <property type="project" value="TAIR"/>
</dbReference>
<dbReference type="GO" id="GO:0033728">
    <property type="term" value="F:3,8-divinyl protochlorophyllide a 8-vinyl-reductase (NADPH) activity"/>
    <property type="evidence" value="ECO:0007669"/>
    <property type="project" value="UniProtKB-EC"/>
</dbReference>
<dbReference type="GO" id="GO:0015995">
    <property type="term" value="P:chlorophyll biosynthetic process"/>
    <property type="evidence" value="ECO:0000315"/>
    <property type="project" value="TAIR"/>
</dbReference>
<dbReference type="CDD" id="cd05243">
    <property type="entry name" value="SDR_a5"/>
    <property type="match status" value="1"/>
</dbReference>
<dbReference type="FunFam" id="3.40.50.720:FF:001068">
    <property type="entry name" value="Divinyl chlorophyllide a 8-vinyl-reductase, chloroplastic"/>
    <property type="match status" value="1"/>
</dbReference>
<dbReference type="Gene3D" id="3.40.50.720">
    <property type="entry name" value="NAD(P)-binding Rossmann-like Domain"/>
    <property type="match status" value="1"/>
</dbReference>
<dbReference type="InterPro" id="IPR044201">
    <property type="entry name" value="DVR-like"/>
</dbReference>
<dbReference type="InterPro" id="IPR016040">
    <property type="entry name" value="NAD(P)-bd_dom"/>
</dbReference>
<dbReference type="InterPro" id="IPR036291">
    <property type="entry name" value="NAD(P)-bd_dom_sf"/>
</dbReference>
<dbReference type="PANTHER" id="PTHR47378">
    <property type="entry name" value="DIVINYL CHLOROPHYLLIDE A 8-VINYL-REDUCTASE, CHLOROPLASTIC"/>
    <property type="match status" value="1"/>
</dbReference>
<dbReference type="PANTHER" id="PTHR47378:SF1">
    <property type="entry name" value="DIVINYL CHLOROPHYLLIDE A 8-VINYL-REDUCTASE, CHLOROPLASTIC"/>
    <property type="match status" value="1"/>
</dbReference>
<dbReference type="Pfam" id="PF13460">
    <property type="entry name" value="NAD_binding_10"/>
    <property type="match status" value="1"/>
</dbReference>
<dbReference type="SUPFAM" id="SSF51735">
    <property type="entry name" value="NAD(P)-binding Rossmann-fold domains"/>
    <property type="match status" value="1"/>
</dbReference>
<feature type="transit peptide" description="Chloroplast" evidence="1">
    <location>
        <begin position="1"/>
        <end position="49"/>
    </location>
</feature>
<feature type="chain" id="PRO_0000422534" description="Divinyl chlorophyllide a 8-vinyl-reductase, chloroplastic">
    <location>
        <begin position="50"/>
        <end position="417"/>
    </location>
</feature>
<feature type="mutagenesis site" description="Decreased catalytic activity, accumulation of divinyl chlorophylls and pale green mutant." evidence="2">
    <original>P</original>
    <variation>L</variation>
    <location>
        <position position="333"/>
    </location>
</feature>
<feature type="sequence conflict" description="In Ref. 7; AAM62911." evidence="6" ref="7">
    <original>G</original>
    <variation>E</variation>
    <location>
        <position position="380"/>
    </location>
</feature>
<feature type="sequence conflict" description="In Ref. 5; BAC41829." evidence="6" ref="5">
    <original>E</original>
    <variation>G</variation>
    <location>
        <position position="381"/>
    </location>
</feature>
<name>DCVR_ARATH</name>
<gene>
    <name type="primary">DVR</name>
    <name type="synonym">PCB2</name>
    <name type="ordered locus">At5g18660</name>
    <name type="ORF">T1A4.40</name>
</gene>
<keyword id="KW-0149">Chlorophyll biosynthesis</keyword>
<keyword id="KW-0150">Chloroplast</keyword>
<keyword id="KW-0521">NADP</keyword>
<keyword id="KW-0560">Oxidoreductase</keyword>
<keyword id="KW-0934">Plastid</keyword>
<keyword id="KW-1185">Reference proteome</keyword>
<keyword id="KW-0809">Transit peptide</keyword>
<accession>Q1H537</accession>
<accession>Q8GZ86</accession>
<accession>Q8LE07</accession>
<reference key="1">
    <citation type="journal article" date="2005" name="Plant Cell">
        <title>Identification of a vinyl reductase gene for chlorophyll synthesis in Arabidopsis thaliana and implications for the evolution of Prochlorococcus species.</title>
        <authorList>
            <person name="Nagata N."/>
            <person name="Tanaka R."/>
            <person name="Satoh S."/>
            <person name="Tanaka A."/>
        </authorList>
    </citation>
    <scope>NUCLEOTIDE SEQUENCE [MRNA]</scope>
    <scope>FUNCTION</scope>
    <scope>CATALYTIC ACTIVITY</scope>
    <scope>MUTAGENESIS OF PRO-333</scope>
</reference>
<reference key="2">
    <citation type="journal article" date="2005" name="Plant Cell Physiol.">
        <title>Characterization of the Arabidopsis thaliana mutant pcb2 which accumulates divinyl chlorophylls.</title>
        <authorList>
            <person name="Nakanishi H."/>
            <person name="Nozue H."/>
            <person name="Suzuki K."/>
            <person name="Kaneko Y."/>
            <person name="Taguchi G."/>
            <person name="Hayashida N."/>
        </authorList>
    </citation>
    <scope>NUCLEOTIDE SEQUENCE [MRNA]</scope>
    <scope>FUNCTION</scope>
    <scope>TISSUE SPECIFICITY</scope>
    <scope>SUBCELLULAR LOCATION</scope>
    <scope>DISRUPTION PHENOTYPE</scope>
    <source>
        <strain>cv. Columbia</strain>
    </source>
</reference>
<reference key="3">
    <citation type="journal article" date="2000" name="Nature">
        <title>Sequence and analysis of chromosome 5 of the plant Arabidopsis thaliana.</title>
        <authorList>
            <person name="Tabata S."/>
            <person name="Kaneko T."/>
            <person name="Nakamura Y."/>
            <person name="Kotani H."/>
            <person name="Kato T."/>
            <person name="Asamizu E."/>
            <person name="Miyajima N."/>
            <person name="Sasamoto S."/>
            <person name="Kimura T."/>
            <person name="Hosouchi T."/>
            <person name="Kawashima K."/>
            <person name="Kohara M."/>
            <person name="Matsumoto M."/>
            <person name="Matsuno A."/>
            <person name="Muraki A."/>
            <person name="Nakayama S."/>
            <person name="Nakazaki N."/>
            <person name="Naruo K."/>
            <person name="Okumura S."/>
            <person name="Shinpo S."/>
            <person name="Takeuchi C."/>
            <person name="Wada T."/>
            <person name="Watanabe A."/>
            <person name="Yamada M."/>
            <person name="Yasuda M."/>
            <person name="Sato S."/>
            <person name="de la Bastide M."/>
            <person name="Huang E."/>
            <person name="Spiegel L."/>
            <person name="Gnoj L."/>
            <person name="O'Shaughnessy A."/>
            <person name="Preston R."/>
            <person name="Habermann K."/>
            <person name="Murray J."/>
            <person name="Johnson D."/>
            <person name="Rohlfing T."/>
            <person name="Nelson J."/>
            <person name="Stoneking T."/>
            <person name="Pepin K."/>
            <person name="Spieth J."/>
            <person name="Sekhon M."/>
            <person name="Armstrong J."/>
            <person name="Becker M."/>
            <person name="Belter E."/>
            <person name="Cordum H."/>
            <person name="Cordes M."/>
            <person name="Courtney L."/>
            <person name="Courtney W."/>
            <person name="Dante M."/>
            <person name="Du H."/>
            <person name="Edwards J."/>
            <person name="Fryman J."/>
            <person name="Haakensen B."/>
            <person name="Lamar E."/>
            <person name="Latreille P."/>
            <person name="Leonard S."/>
            <person name="Meyer R."/>
            <person name="Mulvaney E."/>
            <person name="Ozersky P."/>
            <person name="Riley A."/>
            <person name="Strowmatt C."/>
            <person name="Wagner-McPherson C."/>
            <person name="Wollam A."/>
            <person name="Yoakum M."/>
            <person name="Bell M."/>
            <person name="Dedhia N."/>
            <person name="Parnell L."/>
            <person name="Shah R."/>
            <person name="Rodriguez M."/>
            <person name="Hoon See L."/>
            <person name="Vil D."/>
            <person name="Baker J."/>
            <person name="Kirchoff K."/>
            <person name="Toth K."/>
            <person name="King L."/>
            <person name="Bahret A."/>
            <person name="Miller B."/>
            <person name="Marra M.A."/>
            <person name="Martienssen R."/>
            <person name="McCombie W.R."/>
            <person name="Wilson R.K."/>
            <person name="Murphy G."/>
            <person name="Bancroft I."/>
            <person name="Volckaert G."/>
            <person name="Wambutt R."/>
            <person name="Duesterhoeft A."/>
            <person name="Stiekema W."/>
            <person name="Pohl T."/>
            <person name="Entian K.-D."/>
            <person name="Terryn N."/>
            <person name="Hartley N."/>
            <person name="Bent E."/>
            <person name="Johnson S."/>
            <person name="Langham S.-A."/>
            <person name="McCullagh B."/>
            <person name="Robben J."/>
            <person name="Grymonprez B."/>
            <person name="Zimmermann W."/>
            <person name="Ramsperger U."/>
            <person name="Wedler H."/>
            <person name="Balke K."/>
            <person name="Wedler E."/>
            <person name="Peters S."/>
            <person name="van Staveren M."/>
            <person name="Dirkse W."/>
            <person name="Mooijman P."/>
            <person name="Klein Lankhorst R."/>
            <person name="Weitzenegger T."/>
            <person name="Bothe G."/>
            <person name="Rose M."/>
            <person name="Hauf J."/>
            <person name="Berneiser S."/>
            <person name="Hempel S."/>
            <person name="Feldpausch M."/>
            <person name="Lamberth S."/>
            <person name="Villarroel R."/>
            <person name="Gielen J."/>
            <person name="Ardiles W."/>
            <person name="Bents O."/>
            <person name="Lemcke K."/>
            <person name="Kolesov G."/>
            <person name="Mayer K.F.X."/>
            <person name="Rudd S."/>
            <person name="Schoof H."/>
            <person name="Schueller C."/>
            <person name="Zaccaria P."/>
            <person name="Mewes H.-W."/>
            <person name="Bevan M."/>
            <person name="Fransz P.F."/>
        </authorList>
    </citation>
    <scope>NUCLEOTIDE SEQUENCE [LARGE SCALE GENOMIC DNA]</scope>
    <source>
        <strain>cv. Columbia</strain>
    </source>
</reference>
<reference key="4">
    <citation type="journal article" date="2017" name="Plant J.">
        <title>Araport11: a complete reannotation of the Arabidopsis thaliana reference genome.</title>
        <authorList>
            <person name="Cheng C.Y."/>
            <person name="Krishnakumar V."/>
            <person name="Chan A.P."/>
            <person name="Thibaud-Nissen F."/>
            <person name="Schobel S."/>
            <person name="Town C.D."/>
        </authorList>
    </citation>
    <scope>GENOME REANNOTATION</scope>
    <source>
        <strain>cv. Columbia</strain>
    </source>
</reference>
<reference key="5">
    <citation type="journal article" date="2002" name="Science">
        <title>Functional annotation of a full-length Arabidopsis cDNA collection.</title>
        <authorList>
            <person name="Seki M."/>
            <person name="Narusaka M."/>
            <person name="Kamiya A."/>
            <person name="Ishida J."/>
            <person name="Satou M."/>
            <person name="Sakurai T."/>
            <person name="Nakajima M."/>
            <person name="Enju A."/>
            <person name="Akiyama K."/>
            <person name="Oono Y."/>
            <person name="Muramatsu M."/>
            <person name="Hayashizaki Y."/>
            <person name="Kawai J."/>
            <person name="Carninci P."/>
            <person name="Itoh M."/>
            <person name="Ishii Y."/>
            <person name="Arakawa T."/>
            <person name="Shibata K."/>
            <person name="Shinagawa A."/>
            <person name="Shinozaki K."/>
        </authorList>
    </citation>
    <scope>NUCLEOTIDE SEQUENCE [LARGE SCALE MRNA]</scope>
    <source>
        <strain>cv. Columbia</strain>
    </source>
</reference>
<reference key="6">
    <citation type="submission" date="2006-05" db="EMBL/GenBank/DDBJ databases">
        <title>Arabidopsis ORF clones.</title>
        <authorList>
            <person name="Shinn P."/>
            <person name="Chen H."/>
            <person name="Kim C.J."/>
            <person name="Quinitio C."/>
            <person name="Ecker J.R."/>
        </authorList>
    </citation>
    <scope>NUCLEOTIDE SEQUENCE [LARGE SCALE MRNA]</scope>
</reference>
<reference key="7">
    <citation type="submission" date="2002-03" db="EMBL/GenBank/DDBJ databases">
        <title>Full-length cDNA from Arabidopsis thaliana.</title>
        <authorList>
            <person name="Brover V.V."/>
            <person name="Troukhan M.E."/>
            <person name="Alexandrov N.A."/>
            <person name="Lu Y.-P."/>
            <person name="Flavell R.B."/>
            <person name="Feldmann K.A."/>
        </authorList>
    </citation>
    <scope>NUCLEOTIDE SEQUENCE [LARGE SCALE MRNA]</scope>
</reference>
<reference key="8">
    <citation type="journal article" date="2007" name="Plant Cell Physiol.">
        <title>The major route for chlorophyll synthesis includes [3,8-divinyl]-chlorophyllide a reduction in Arabidopsis thaliana.</title>
        <authorList>
            <person name="Nagata N."/>
            <person name="Tanaka R."/>
            <person name="Tanaka A."/>
        </authorList>
    </citation>
    <scope>FUNCTION</scope>
    <scope>CATALYTIC ACTIVITY</scope>
    <scope>BIOPHYSICOCHEMICAL PROPERTIES</scope>
</reference>
<reference key="9">
    <citation type="journal article" date="2013" name="Plant Physiol.">
        <title>One divinyl reductase reduces the 8-vinyl groups in various intermediates of chlorophyll biosynthesis in a given higher plant species, but the isozyme differs between species.</title>
        <authorList>
            <person name="Wang P."/>
            <person name="Wan C."/>
            <person name="Xu Z."/>
            <person name="Wang P."/>
            <person name="Wang W."/>
            <person name="Sun C."/>
            <person name="Ma X."/>
            <person name="Xiao Y."/>
            <person name="Zhu J."/>
            <person name="Gao X."/>
            <person name="Deng X."/>
        </authorList>
    </citation>
    <scope>FUNCTION</scope>
    <scope>BIOPHYSICOCHEMICAL PROPERTIES</scope>
</reference>
<proteinExistence type="evidence at protein level"/>
<comment type="function">
    <text evidence="2 3 4 5">Catalyzes the conversion of divinyl chlorophyllide to monovinyl chlorophyllide. Reduces the 8-vinyl group of the tetrapyrrole to an ethyl group using NADPH as the reductant. The best substrate is (3,8-divinyl)-chlorophyllide a (DV-Chlidea). Very low activity with (3,8-divinyl)-protochlorophyllide a (DV-Pchlidea) and (3,8-divinyl)-magnesium-protoporphyrin IX monomethyl ester (DV-MPE). No activity with (3,8-divinyl)-chlorophyllide b (DV-Chlideb), (3,8-divinyl)-magnesium-protoporphyrin IX (DV-Mg-Proto) and either (3,8-divinyl)-chlorophyll a (DV-Chla) or b (DV-Chlb).</text>
</comment>
<comment type="catalytic activity">
    <reaction evidence="2 4">
        <text>protochlorophyllide a + NADP(+) = 3,8-divinyl protochlorophyllide a + NADPH + H(+)</text>
        <dbReference type="Rhea" id="RHEA:48884"/>
        <dbReference type="ChEBI" id="CHEBI:15378"/>
        <dbReference type="ChEBI" id="CHEBI:57783"/>
        <dbReference type="ChEBI" id="CHEBI:58349"/>
        <dbReference type="ChEBI" id="CHEBI:58632"/>
        <dbReference type="ChEBI" id="CHEBI:83350"/>
        <dbReference type="EC" id="1.3.1.75"/>
    </reaction>
</comment>
<comment type="biophysicochemical properties">
    <phDependence>
        <text evidence="4 5">Optimum pH is 7.0.</text>
    </phDependence>
    <temperatureDependence>
        <text evidence="4 5">Optimum temperature is 30 degrees Celsius.</text>
    </temperatureDependence>
</comment>
<comment type="pathway">
    <text>Porphyrin-containing compound metabolism; chlorophyll biosynthesis.</text>
</comment>
<comment type="subcellular location">
    <subcellularLocation>
        <location evidence="3">Plastid</location>
        <location evidence="3">Chloroplast</location>
    </subcellularLocation>
</comment>
<comment type="tissue specificity">
    <text evidence="3">Highly expressed in leaves, stems and flower buds. Detected in roots.</text>
</comment>
<comment type="disruption phenotype">
    <text evidence="3">Pale-green leaves with a reduced amount of chlorophylls a and b, and an accumulation of divinyl chlorophylls. Severe reduction of grana stacks in chloroplasts.</text>
</comment>
<sequence>MSLCSSFNVFASYSPKPKTIFKDSKFISQFQVKSSPLASTFHTNESSTSLKYKRARLKPISSLDSGISEIATSPSFRNKSPKDINVLVVGSTGYIGRFVVKEMIKRGFNVIAVAREKSGIRGKNDKEETLKQLQGANVCFSDVTELDVLEKSIENLGFGVDVVVSCLASRNGGIKDSWKIDYEATKNSLVAGKKFGAKHFVLLSAICVQKPLLEFQRAKLKFEAELMDLAEQQDSSFTYSIVRPTAFFKSLGGQVEIVKDGKPYVMFGDGKLCACKPISEQDLAAFIADCVLEENKINQVLPIGGPGKALTPLEQGEILFKILGREPKFLKVPIEIMDFVIGVLDSIAKIFPSVGEAAEFGKIGRYYAAESMLILDPETGEYSEEKTPSYGKDTLEDFFAKVIREGMAGQELGEQFF</sequence>
<protein>
    <recommendedName>
        <fullName>Divinyl chlorophyllide a 8-vinyl-reductase, chloroplastic</fullName>
        <ecNumber evidence="2 4">1.3.1.75</ecNumber>
    </recommendedName>
    <alternativeName>
        <fullName>Protein PALE-GREEN AND CHLOROPHYLL B REDUCED 2</fullName>
    </alternativeName>
</protein>
<organism>
    <name type="scientific">Arabidopsis thaliana</name>
    <name type="common">Mouse-ear cress</name>
    <dbReference type="NCBI Taxonomy" id="3702"/>
    <lineage>
        <taxon>Eukaryota</taxon>
        <taxon>Viridiplantae</taxon>
        <taxon>Streptophyta</taxon>
        <taxon>Embryophyta</taxon>
        <taxon>Tracheophyta</taxon>
        <taxon>Spermatophyta</taxon>
        <taxon>Magnoliopsida</taxon>
        <taxon>eudicotyledons</taxon>
        <taxon>Gunneridae</taxon>
        <taxon>Pentapetalae</taxon>
        <taxon>rosids</taxon>
        <taxon>malvids</taxon>
        <taxon>Brassicales</taxon>
        <taxon>Brassicaceae</taxon>
        <taxon>Camelineae</taxon>
        <taxon>Arabidopsis</taxon>
    </lineage>
</organism>
<evidence type="ECO:0000255" key="1"/>
<evidence type="ECO:0000269" key="2">
    <source>
    </source>
</evidence>
<evidence type="ECO:0000269" key="3">
    <source>
    </source>
</evidence>
<evidence type="ECO:0000269" key="4">
    <source>
    </source>
</evidence>
<evidence type="ECO:0000269" key="5">
    <source>
    </source>
</evidence>
<evidence type="ECO:0000305" key="6"/>